<organism>
    <name type="scientific">Brucella suis biovar 1 (strain 1330)</name>
    <dbReference type="NCBI Taxonomy" id="204722"/>
    <lineage>
        <taxon>Bacteria</taxon>
        <taxon>Pseudomonadati</taxon>
        <taxon>Pseudomonadota</taxon>
        <taxon>Alphaproteobacteria</taxon>
        <taxon>Hyphomicrobiales</taxon>
        <taxon>Brucellaceae</taxon>
        <taxon>Brucella/Ochrobactrum group</taxon>
        <taxon>Brucella</taxon>
    </lineage>
</organism>
<keyword id="KW-0998">Cell outer membrane</keyword>
<keyword id="KW-0472">Membrane</keyword>
<keyword id="KW-0675">Receptor</keyword>
<keyword id="KW-0732">Signal</keyword>
<keyword id="KW-0798">TonB box</keyword>
<keyword id="KW-0812">Transmembrane</keyword>
<keyword id="KW-1134">Transmembrane beta strand</keyword>
<keyword id="KW-0813">Transport</keyword>
<proteinExistence type="inferred from homology"/>
<sequence>MKFTRTLVLASTFLLATVATSQAQEVKRDTKKRGEVVLKPITIISHGKDNIEATGGTVLTYKDIEKLQPANVSELFSRQSSIAVSGGGGPSKRIHILGMEQSNLAVSVDGVPQTATSWHHTGSNVIDPAFLKRVEVEAGAAAADSGFGAAAGAIRYETVNALDLLEPGKTFGARIIGSYGTNGRGFSGSTAAYGLKDGFDWLLMLHGTSGHNYKNGDGTEILGTEPAARNILGKAGYEFDGNRIDIGYERSRDKADRLIKMNMGLPGDTEYPLEVARDSVNIKYTRTDATDMWDPEVQFYYNRNDYWRNDYQNRTNGNMILKEDLYGGKLQNTFTIDYGKITAGIDFGKHDYNTDNYGHNDRRYRKFNTQQVGAFTQGRFEFDNGFSLSTGARYDYSRFADWNDEVFSDSGASVNGTLSYKFNEHIEVFAGASRTWLGYVLGDYGYVHARNNAFYTDPTFSPGRARNYKAGVNFGGADWSAGITLFDTRIAGLPNYDSQKLGNDPEEYRSRGFTLNARYIWNYTTIGATFTKAKVTAGDDPVLPNSGSFMPIGDMATLFIDQEIPDYNMKVGATLAWAGRISDEAATAANFYDQPAYTVVNAYAEWNPPAVKNMTLRVGVENLFNENYYERTSFAPSQKRGGIDPVWAPGRTFTFQTAFKF</sequence>
<comment type="function">
    <text evidence="1">Heme transporter.</text>
</comment>
<comment type="subcellular location">
    <subcellularLocation>
        <location evidence="3">Cell outer membrane</location>
        <topology evidence="3">Multi-pass membrane protein</topology>
    </subcellularLocation>
</comment>
<comment type="induction">
    <text evidence="1">Induced in absence of iron.</text>
</comment>
<comment type="similarity">
    <text evidence="4">Belongs to the TonB-dependent receptor family.</text>
</comment>
<evidence type="ECO:0000250" key="1"/>
<evidence type="ECO:0000255" key="2"/>
<evidence type="ECO:0000255" key="3">
    <source>
        <dbReference type="PROSITE-ProRule" id="PRU01360"/>
    </source>
</evidence>
<evidence type="ECO:0000305" key="4"/>
<dbReference type="EMBL" id="AE014292">
    <property type="protein sequence ID" value="AAN34348.1"/>
    <property type="molecule type" value="Genomic_DNA"/>
</dbReference>
<dbReference type="EMBL" id="CP002998">
    <property type="protein sequence ID" value="AEM20624.1"/>
    <property type="molecule type" value="Genomic_DNA"/>
</dbReference>
<dbReference type="RefSeq" id="WP_006191543.1">
    <property type="nucleotide sequence ID" value="NZ_KN046805.1"/>
</dbReference>
<dbReference type="SMR" id="Q8FUN0"/>
<dbReference type="GeneID" id="45054171"/>
<dbReference type="KEGG" id="bms:BRA1190"/>
<dbReference type="KEGG" id="bsi:BS1330_II1181"/>
<dbReference type="PATRIC" id="fig|204722.22.peg.2783"/>
<dbReference type="HOGENOM" id="CLU_008287_19_4_5"/>
<dbReference type="PhylomeDB" id="Q8FUN0"/>
<dbReference type="Proteomes" id="UP000007104">
    <property type="component" value="Chromosome II"/>
</dbReference>
<dbReference type="GO" id="GO:0009279">
    <property type="term" value="C:cell outer membrane"/>
    <property type="evidence" value="ECO:0007669"/>
    <property type="project" value="UniProtKB-SubCell"/>
</dbReference>
<dbReference type="GO" id="GO:0015344">
    <property type="term" value="F:siderophore uptake transmembrane transporter activity"/>
    <property type="evidence" value="ECO:0007669"/>
    <property type="project" value="TreeGrafter"/>
</dbReference>
<dbReference type="CDD" id="cd01347">
    <property type="entry name" value="ligand_gated_channel"/>
    <property type="match status" value="1"/>
</dbReference>
<dbReference type="Gene3D" id="2.40.170.20">
    <property type="entry name" value="TonB-dependent receptor, beta-barrel domain"/>
    <property type="match status" value="1"/>
</dbReference>
<dbReference type="Gene3D" id="2.170.130.10">
    <property type="entry name" value="TonB-dependent receptor, plug domain"/>
    <property type="match status" value="1"/>
</dbReference>
<dbReference type="InterPro" id="IPR012910">
    <property type="entry name" value="Plug_dom"/>
</dbReference>
<dbReference type="InterPro" id="IPR037066">
    <property type="entry name" value="Plug_dom_sf"/>
</dbReference>
<dbReference type="InterPro" id="IPR039426">
    <property type="entry name" value="TonB-dep_rcpt-like"/>
</dbReference>
<dbReference type="InterPro" id="IPR000531">
    <property type="entry name" value="TonB-dep_rcpt_b-brl"/>
</dbReference>
<dbReference type="InterPro" id="IPR036942">
    <property type="entry name" value="TonB_rcpt_b-brl_sf"/>
</dbReference>
<dbReference type="PANTHER" id="PTHR30069:SF41">
    <property type="entry name" value="HEME_HEMOPEXIN UTILIZATION PROTEIN C"/>
    <property type="match status" value="1"/>
</dbReference>
<dbReference type="PANTHER" id="PTHR30069">
    <property type="entry name" value="TONB-DEPENDENT OUTER MEMBRANE RECEPTOR"/>
    <property type="match status" value="1"/>
</dbReference>
<dbReference type="Pfam" id="PF07715">
    <property type="entry name" value="Plug"/>
    <property type="match status" value="1"/>
</dbReference>
<dbReference type="Pfam" id="PF00593">
    <property type="entry name" value="TonB_dep_Rec_b-barrel"/>
    <property type="match status" value="1"/>
</dbReference>
<dbReference type="SUPFAM" id="SSF56935">
    <property type="entry name" value="Porins"/>
    <property type="match status" value="1"/>
</dbReference>
<dbReference type="PROSITE" id="PS52016">
    <property type="entry name" value="TONB_DEPENDENT_REC_3"/>
    <property type="match status" value="1"/>
</dbReference>
<gene>
    <name type="primary">bhuA</name>
    <name type="ordered locus">BRA1190</name>
    <name type="ordered locus">BS1330_II1181</name>
</gene>
<feature type="signal peptide" evidence="2">
    <location>
        <begin position="1"/>
        <end position="23"/>
    </location>
</feature>
<feature type="chain" id="PRO_0000325860" description="Heme transporter BhuA">
    <location>
        <begin position="24"/>
        <end position="661"/>
    </location>
</feature>
<feature type="domain" description="TBDR plug" evidence="3">
    <location>
        <begin position="48"/>
        <end position="159"/>
    </location>
</feature>
<feature type="domain" description="TBDR beta-barrel" evidence="3">
    <location>
        <begin position="170"/>
        <end position="661"/>
    </location>
</feature>
<protein>
    <recommendedName>
        <fullName>Heme transporter BhuA</fullName>
    </recommendedName>
</protein>
<accession>Q8FUN0</accession>
<accession>G0KEI6</accession>
<name>BHUA_BRUSU</name>
<reference key="1">
    <citation type="journal article" date="2002" name="Proc. Natl. Acad. Sci. U.S.A.">
        <title>The Brucella suis genome reveals fundamental similarities between animal and plant pathogens and symbionts.</title>
        <authorList>
            <person name="Paulsen I.T."/>
            <person name="Seshadri R."/>
            <person name="Nelson K.E."/>
            <person name="Eisen J.A."/>
            <person name="Heidelberg J.F."/>
            <person name="Read T.D."/>
            <person name="Dodson R.J."/>
            <person name="Umayam L.A."/>
            <person name="Brinkac L.M."/>
            <person name="Beanan M.J."/>
            <person name="Daugherty S.C."/>
            <person name="DeBoy R.T."/>
            <person name="Durkin A.S."/>
            <person name="Kolonay J.F."/>
            <person name="Madupu R."/>
            <person name="Nelson W.C."/>
            <person name="Ayodeji B."/>
            <person name="Kraul M."/>
            <person name="Shetty J."/>
            <person name="Malek J.A."/>
            <person name="Van Aken S.E."/>
            <person name="Riedmuller S."/>
            <person name="Tettelin H."/>
            <person name="Gill S.R."/>
            <person name="White O."/>
            <person name="Salzberg S.L."/>
            <person name="Hoover D.L."/>
            <person name="Lindler L.E."/>
            <person name="Halling S.M."/>
            <person name="Boyle S.M."/>
            <person name="Fraser C.M."/>
        </authorList>
    </citation>
    <scope>NUCLEOTIDE SEQUENCE [LARGE SCALE GENOMIC DNA]</scope>
    <source>
        <strain>1330</strain>
    </source>
</reference>
<reference key="2">
    <citation type="journal article" date="2011" name="J. Bacteriol.">
        <title>Revised genome sequence of Brucella suis 1330.</title>
        <authorList>
            <person name="Tae H."/>
            <person name="Shallom S."/>
            <person name="Settlage R."/>
            <person name="Preston D."/>
            <person name="Adams L.G."/>
            <person name="Garner H.R."/>
        </authorList>
    </citation>
    <scope>NUCLEOTIDE SEQUENCE [LARGE SCALE GENOMIC DNA]</scope>
    <source>
        <strain>1330</strain>
    </source>
</reference>